<proteinExistence type="evidence at protein level"/>
<reference key="1">
    <citation type="journal article" date="1982" name="J. Biol. Chem.">
        <title>The nucleotide sequences of rearranged and germline immunoglobulin VH genes of a mouse myeloma MC101 and evolution of VH genes in mouse.</title>
        <authorList>
            <person name="Kataoka T."/>
            <person name="Nikaido T."/>
            <person name="Miyata T."/>
            <person name="Moriwaki K."/>
            <person name="Honjo T."/>
        </authorList>
    </citation>
    <scope>NUCLEOTIDE SEQUENCE [GENOMIC DNA]</scope>
</reference>
<reference evidence="6" key="2">
    <citation type="journal article" date="2009" name="PLoS Biol.">
        <title>Lineage-specific biology revealed by a finished genome assembly of the mouse.</title>
        <authorList>
            <person name="Church D.M."/>
            <person name="Goodstadt L."/>
            <person name="Hillier L.W."/>
            <person name="Zody M.C."/>
            <person name="Goldstein S."/>
            <person name="She X."/>
            <person name="Bult C.J."/>
            <person name="Agarwala R."/>
            <person name="Cherry J.L."/>
            <person name="DiCuccio M."/>
            <person name="Hlavina W."/>
            <person name="Kapustin Y."/>
            <person name="Meric P."/>
            <person name="Maglott D."/>
            <person name="Birtle Z."/>
            <person name="Marques A.C."/>
            <person name="Graves T."/>
            <person name="Zhou S."/>
            <person name="Teague B."/>
            <person name="Potamousis K."/>
            <person name="Churas C."/>
            <person name="Place M."/>
            <person name="Herschleb J."/>
            <person name="Runnheim R."/>
            <person name="Forrest D."/>
            <person name="Amos-Landgraf J."/>
            <person name="Schwartz D.C."/>
            <person name="Cheng Z."/>
            <person name="Lindblad-Toh K."/>
            <person name="Eichler E.E."/>
            <person name="Ponting C.P."/>
        </authorList>
    </citation>
    <scope>NUCLEOTIDE SEQUENCE [LARGE SCALE GENOMIC DNA]</scope>
    <source>
        <strain evidence="6">C57BL/6J</strain>
    </source>
</reference>
<reference evidence="4" key="3">
    <citation type="journal article" date="2011" name="PLoS Biol.">
        <title>Modernizing reference genome assemblies.</title>
        <authorList>
            <person name="Church D.M."/>
            <person name="Schneider V.A."/>
            <person name="Graves T."/>
            <person name="Auger K."/>
            <person name="Cunningham F."/>
            <person name="Bouk N."/>
            <person name="Chen H.C."/>
            <person name="Agarwala R."/>
            <person name="McLaren W.M."/>
            <person name="Ritchie G.R."/>
            <person name="Albracht D."/>
            <person name="Kremitzki M."/>
            <person name="Rock S."/>
            <person name="Kotkiewicz H."/>
            <person name="Kremitzki C."/>
            <person name="Wollam A."/>
            <person name="Trani L."/>
            <person name="Fulton L."/>
            <person name="Fulton R."/>
            <person name="Matthews L."/>
            <person name="Whitehead S."/>
            <person name="Chow W."/>
            <person name="Torrance J."/>
            <person name="Dunn M."/>
            <person name="Harden G."/>
            <person name="Threadgold G."/>
            <person name="Wood J."/>
            <person name="Collins J."/>
            <person name="Heath P."/>
            <person name="Griffiths G."/>
            <person name="Pelan S."/>
            <person name="Grafham D."/>
            <person name="Eichler E.E."/>
            <person name="Weinstock G."/>
            <person name="Mardis E.R."/>
            <person name="Wilson R.K."/>
            <person name="Howe K."/>
            <person name="Flicek P."/>
            <person name="Hubbard T."/>
        </authorList>
    </citation>
    <scope>NUCLEOTIDE SEQUENCE [LARGE SCALE GENOMIC DNA]</scope>
    <source>
        <strain evidence="4">C57BL/6J</strain>
    </source>
</reference>
<accession>P01821</accession>
<accession>A0A075B5Q1</accession>
<sequence length="116" mass="12603">MAVLVLLFCLVTFPSCVLSQVQLKQSGPGLVQPSQSLSITCTVSGFSLTSYGVHWVRQPPGKGLEWLGVIWSGGSTDYNAAFISRLSISKDNSKSQVFFKMNSLQADDTAIYYCAK</sequence>
<dbReference type="EMBL" id="J00502">
    <property type="protein sequence ID" value="AAA38515.1"/>
    <property type="molecule type" value="Genomic_DNA"/>
</dbReference>
<dbReference type="PIR" id="A02096">
    <property type="entry name" value="G1MS10"/>
</dbReference>
<dbReference type="PIR" id="A25913">
    <property type="entry name" value="A25913"/>
</dbReference>
<dbReference type="PIR" id="A33932">
    <property type="entry name" value="A33932"/>
</dbReference>
<dbReference type="PDB" id="1T2Q">
    <property type="method" value="X-ray"/>
    <property type="resolution" value="1.83 A"/>
    <property type="chains" value="H=26-116"/>
</dbReference>
<dbReference type="PDBsum" id="1T2Q"/>
<dbReference type="SMR" id="P01821"/>
<dbReference type="FunCoup" id="P01821">
    <property type="interactions" value="552"/>
</dbReference>
<dbReference type="Ensembl" id="ENSMUST00000103447.2">
    <property type="protein sequence ID" value="ENSMUSP00000100228.2"/>
    <property type="gene ID" value="ENSMUSG00000095866.2"/>
</dbReference>
<dbReference type="AGR" id="MGI:3643263"/>
<dbReference type="MGI" id="MGI:3643263">
    <property type="gene designation" value="Ighv2-4"/>
</dbReference>
<dbReference type="VEuPathDB" id="HostDB:ENSMUSG00000095866"/>
<dbReference type="GeneTree" id="ENSGT01030000234536"/>
<dbReference type="HOGENOM" id="CLU_077975_5_0_1"/>
<dbReference type="InParanoid" id="P01821"/>
<dbReference type="OMA" id="MGTIWAG"/>
<dbReference type="EvolutionaryTrace" id="P01821"/>
<dbReference type="PRO" id="PR:P01821"/>
<dbReference type="Proteomes" id="UP000000589">
    <property type="component" value="Chromosome 12"/>
</dbReference>
<dbReference type="RNAct" id="P01821">
    <property type="molecule type" value="protein"/>
</dbReference>
<dbReference type="Bgee" id="ENSMUSG00000095866">
    <property type="expression patterns" value="Expressed in jejunum and 11 other cell types or tissues"/>
</dbReference>
<dbReference type="GO" id="GO:0005576">
    <property type="term" value="C:extracellular region"/>
    <property type="evidence" value="ECO:0007669"/>
    <property type="project" value="UniProtKB-ARBA"/>
</dbReference>
<dbReference type="GO" id="GO:0019814">
    <property type="term" value="C:immunoglobulin complex"/>
    <property type="evidence" value="ECO:0007669"/>
    <property type="project" value="UniProtKB-KW"/>
</dbReference>
<dbReference type="GO" id="GO:0002250">
    <property type="term" value="P:adaptive immune response"/>
    <property type="evidence" value="ECO:0007669"/>
    <property type="project" value="UniProtKB-KW"/>
</dbReference>
<dbReference type="FunFam" id="2.60.40.10:FF:001621">
    <property type="entry name" value="Immunoglobulin heavy variable 2-6-8"/>
    <property type="match status" value="1"/>
</dbReference>
<dbReference type="Gene3D" id="2.60.40.10">
    <property type="entry name" value="Immunoglobulins"/>
    <property type="match status" value="1"/>
</dbReference>
<dbReference type="InterPro" id="IPR007110">
    <property type="entry name" value="Ig-like_dom"/>
</dbReference>
<dbReference type="InterPro" id="IPR036179">
    <property type="entry name" value="Ig-like_dom_sf"/>
</dbReference>
<dbReference type="InterPro" id="IPR013783">
    <property type="entry name" value="Ig-like_fold"/>
</dbReference>
<dbReference type="InterPro" id="IPR013106">
    <property type="entry name" value="Ig_V-set"/>
</dbReference>
<dbReference type="InterPro" id="IPR050199">
    <property type="entry name" value="IgHV"/>
</dbReference>
<dbReference type="PANTHER" id="PTHR23266">
    <property type="entry name" value="IMMUNOGLOBULIN HEAVY CHAIN"/>
    <property type="match status" value="1"/>
</dbReference>
<dbReference type="Pfam" id="PF07686">
    <property type="entry name" value="V-set"/>
    <property type="match status" value="1"/>
</dbReference>
<dbReference type="SMART" id="SM00406">
    <property type="entry name" value="IGv"/>
    <property type="match status" value="1"/>
</dbReference>
<dbReference type="SUPFAM" id="SSF48726">
    <property type="entry name" value="Immunoglobulin"/>
    <property type="match status" value="1"/>
</dbReference>
<dbReference type="PROSITE" id="PS50835">
    <property type="entry name" value="IG_LIKE"/>
    <property type="match status" value="1"/>
</dbReference>
<protein>
    <recommendedName>
        <fullName evidence="3">Immunoglobulin heavy variable 2-4</fullName>
    </recommendedName>
    <alternativeName>
        <fullName>Ig heavy chain V region MC101</fullName>
    </alternativeName>
</protein>
<gene>
    <name evidence="5" type="primary">Ighv2-4</name>
</gene>
<feature type="signal peptide" evidence="1">
    <location>
        <begin position="1"/>
        <end position="19"/>
    </location>
</feature>
<feature type="chain" id="PRO_0000015231" description="Immunoglobulin heavy variable 2-4">
    <location>
        <begin position="20"/>
        <end position="116"/>
    </location>
</feature>
<feature type="domain" description="Ig-like" evidence="2">
    <location>
        <begin position="20"/>
        <end position="116"/>
    </location>
</feature>
<feature type="disulfide bond" evidence="2">
    <location>
        <begin position="41"/>
        <end position="114"/>
    </location>
</feature>
<feature type="sequence conflict" description="In Ref. 1; AAA38515." evidence="3" ref="1">
    <original>V</original>
    <variation>G</variation>
    <location>
        <position position="5"/>
    </location>
</feature>
<feature type="sequence conflict" description="In Ref. 1; AAA38515." evidence="3" ref="1">
    <original>P</original>
    <variation>S</variation>
    <location>
        <position position="59"/>
    </location>
</feature>
<feature type="sequence conflict" description="In Ref. 1; AAA38515." evidence="3" ref="1">
    <original>AD</original>
    <variation>SN</variation>
    <location>
        <begin position="106"/>
        <end position="107"/>
    </location>
</feature>
<feature type="sequence conflict" description="In Ref. 1; AAA38515." evidence="3" ref="1">
    <original>K</original>
    <variation>R</variation>
    <location>
        <position position="116"/>
    </location>
</feature>
<feature type="strand" evidence="7">
    <location>
        <begin position="23"/>
        <end position="26"/>
    </location>
</feature>
<feature type="strand" evidence="7">
    <location>
        <begin position="29"/>
        <end position="31"/>
    </location>
</feature>
<feature type="strand" evidence="7">
    <location>
        <begin position="37"/>
        <end position="46"/>
    </location>
</feature>
<feature type="turn" evidence="7">
    <location>
        <begin position="48"/>
        <end position="50"/>
    </location>
</feature>
<feature type="strand" evidence="7">
    <location>
        <begin position="53"/>
        <end position="59"/>
    </location>
</feature>
<feature type="turn" evidence="7">
    <location>
        <begin position="60"/>
        <end position="62"/>
    </location>
</feature>
<feature type="strand" evidence="7">
    <location>
        <begin position="63"/>
        <end position="70"/>
    </location>
</feature>
<feature type="strand" evidence="7">
    <location>
        <begin position="76"/>
        <end position="78"/>
    </location>
</feature>
<feature type="turn" evidence="7">
    <location>
        <begin position="80"/>
        <end position="85"/>
    </location>
</feature>
<feature type="strand" evidence="7">
    <location>
        <begin position="86"/>
        <end position="91"/>
    </location>
</feature>
<feature type="turn" evidence="7">
    <location>
        <begin position="92"/>
        <end position="95"/>
    </location>
</feature>
<feature type="strand" evidence="7">
    <location>
        <begin position="96"/>
        <end position="101"/>
    </location>
</feature>
<feature type="helix" evidence="7">
    <location>
        <begin position="106"/>
        <end position="108"/>
    </location>
</feature>
<feature type="strand" evidence="7">
    <location>
        <begin position="110"/>
        <end position="116"/>
    </location>
</feature>
<name>HVM45_MOUSE</name>
<evidence type="ECO:0000255" key="1"/>
<evidence type="ECO:0000255" key="2">
    <source>
        <dbReference type="PROSITE-ProRule" id="PRU00114"/>
    </source>
</evidence>
<evidence type="ECO:0000305" key="3"/>
<evidence type="ECO:0000312" key="4">
    <source>
        <dbReference type="Ensembl" id="ENSMUSP00000100228.2"/>
    </source>
</evidence>
<evidence type="ECO:0000312" key="5">
    <source>
        <dbReference type="MGI" id="MGI:3643263"/>
    </source>
</evidence>
<evidence type="ECO:0000312" key="6">
    <source>
        <dbReference type="Proteomes" id="UP000000589"/>
    </source>
</evidence>
<evidence type="ECO:0007829" key="7">
    <source>
        <dbReference type="PDB" id="1T2Q"/>
    </source>
</evidence>
<keyword id="KW-0002">3D-structure</keyword>
<keyword id="KW-1064">Adaptive immunity</keyword>
<keyword id="KW-1015">Disulfide bond</keyword>
<keyword id="KW-0391">Immunity</keyword>
<keyword id="KW-1280">Immunoglobulin</keyword>
<keyword id="KW-0393">Immunoglobulin domain</keyword>
<keyword id="KW-1185">Reference proteome</keyword>
<keyword id="KW-0732">Signal</keyword>
<organism>
    <name type="scientific">Mus musculus</name>
    <name type="common">Mouse</name>
    <dbReference type="NCBI Taxonomy" id="10090"/>
    <lineage>
        <taxon>Eukaryota</taxon>
        <taxon>Metazoa</taxon>
        <taxon>Chordata</taxon>
        <taxon>Craniata</taxon>
        <taxon>Vertebrata</taxon>
        <taxon>Euteleostomi</taxon>
        <taxon>Mammalia</taxon>
        <taxon>Eutheria</taxon>
        <taxon>Euarchontoglires</taxon>
        <taxon>Glires</taxon>
        <taxon>Rodentia</taxon>
        <taxon>Myomorpha</taxon>
        <taxon>Muroidea</taxon>
        <taxon>Muridae</taxon>
        <taxon>Murinae</taxon>
        <taxon>Mus</taxon>
        <taxon>Mus</taxon>
    </lineage>
</organism>